<proteinExistence type="inferred from homology"/>
<dbReference type="EMBL" id="CP000627">
    <property type="protein sequence ID" value="ABQ19952.1"/>
    <property type="molecule type" value="Genomic_DNA"/>
</dbReference>
<dbReference type="EMBL" id="CP001235">
    <property type="protein sequence ID" value="ACP08579.1"/>
    <property type="status" value="ALT_INIT"/>
    <property type="molecule type" value="Genomic_DNA"/>
</dbReference>
<dbReference type="RefSeq" id="WP_000344156.1">
    <property type="nucleotide sequence ID" value="NZ_JAACZH010000029.1"/>
</dbReference>
<dbReference type="SMR" id="A5F9B5"/>
<dbReference type="KEGG" id="vco:VC0395_A0070"/>
<dbReference type="KEGG" id="vcr:VC395_0560"/>
<dbReference type="PATRIC" id="fig|345073.21.peg.549"/>
<dbReference type="eggNOG" id="COG0468">
    <property type="taxonomic scope" value="Bacteria"/>
</dbReference>
<dbReference type="HOGENOM" id="CLU_040469_3_2_6"/>
<dbReference type="OrthoDB" id="9776733at2"/>
<dbReference type="Proteomes" id="UP000000249">
    <property type="component" value="Chromosome 2"/>
</dbReference>
<dbReference type="GO" id="GO:0005829">
    <property type="term" value="C:cytosol"/>
    <property type="evidence" value="ECO:0007669"/>
    <property type="project" value="TreeGrafter"/>
</dbReference>
<dbReference type="GO" id="GO:0005524">
    <property type="term" value="F:ATP binding"/>
    <property type="evidence" value="ECO:0007669"/>
    <property type="project" value="UniProtKB-UniRule"/>
</dbReference>
<dbReference type="GO" id="GO:0016887">
    <property type="term" value="F:ATP hydrolysis activity"/>
    <property type="evidence" value="ECO:0007669"/>
    <property type="project" value="InterPro"/>
</dbReference>
<dbReference type="GO" id="GO:0140664">
    <property type="term" value="F:ATP-dependent DNA damage sensor activity"/>
    <property type="evidence" value="ECO:0007669"/>
    <property type="project" value="InterPro"/>
</dbReference>
<dbReference type="GO" id="GO:0003684">
    <property type="term" value="F:damaged DNA binding"/>
    <property type="evidence" value="ECO:0007669"/>
    <property type="project" value="UniProtKB-UniRule"/>
</dbReference>
<dbReference type="GO" id="GO:0003697">
    <property type="term" value="F:single-stranded DNA binding"/>
    <property type="evidence" value="ECO:0007669"/>
    <property type="project" value="UniProtKB-UniRule"/>
</dbReference>
<dbReference type="GO" id="GO:0006310">
    <property type="term" value="P:DNA recombination"/>
    <property type="evidence" value="ECO:0007669"/>
    <property type="project" value="UniProtKB-UniRule"/>
</dbReference>
<dbReference type="GO" id="GO:0006281">
    <property type="term" value="P:DNA repair"/>
    <property type="evidence" value="ECO:0007669"/>
    <property type="project" value="UniProtKB-UniRule"/>
</dbReference>
<dbReference type="GO" id="GO:0009432">
    <property type="term" value="P:SOS response"/>
    <property type="evidence" value="ECO:0007669"/>
    <property type="project" value="UniProtKB-UniRule"/>
</dbReference>
<dbReference type="CDD" id="cd00983">
    <property type="entry name" value="RecA"/>
    <property type="match status" value="1"/>
</dbReference>
<dbReference type="FunFam" id="3.40.50.300:FF:000087">
    <property type="entry name" value="Recombinase RecA"/>
    <property type="match status" value="1"/>
</dbReference>
<dbReference type="Gene3D" id="3.40.50.300">
    <property type="entry name" value="P-loop containing nucleotide triphosphate hydrolases"/>
    <property type="match status" value="1"/>
</dbReference>
<dbReference type="HAMAP" id="MF_00268">
    <property type="entry name" value="RecA"/>
    <property type="match status" value="1"/>
</dbReference>
<dbReference type="InterPro" id="IPR003593">
    <property type="entry name" value="AAA+_ATPase"/>
</dbReference>
<dbReference type="InterPro" id="IPR013765">
    <property type="entry name" value="DNA_recomb/repair_RecA"/>
</dbReference>
<dbReference type="InterPro" id="IPR020584">
    <property type="entry name" value="DNA_recomb/repair_RecA_CS"/>
</dbReference>
<dbReference type="InterPro" id="IPR027417">
    <property type="entry name" value="P-loop_NTPase"/>
</dbReference>
<dbReference type="InterPro" id="IPR049261">
    <property type="entry name" value="RecA-like_C"/>
</dbReference>
<dbReference type="InterPro" id="IPR049428">
    <property type="entry name" value="RecA-like_N"/>
</dbReference>
<dbReference type="InterPro" id="IPR020588">
    <property type="entry name" value="RecA_ATP-bd"/>
</dbReference>
<dbReference type="InterPro" id="IPR023400">
    <property type="entry name" value="RecA_C_sf"/>
</dbReference>
<dbReference type="InterPro" id="IPR020587">
    <property type="entry name" value="RecA_monomer-monomer_interface"/>
</dbReference>
<dbReference type="NCBIfam" id="TIGR02012">
    <property type="entry name" value="tigrfam_recA"/>
    <property type="match status" value="1"/>
</dbReference>
<dbReference type="PANTHER" id="PTHR45900:SF1">
    <property type="entry name" value="MITOCHONDRIAL DNA REPAIR PROTEIN RECA HOMOLOG-RELATED"/>
    <property type="match status" value="1"/>
</dbReference>
<dbReference type="PANTHER" id="PTHR45900">
    <property type="entry name" value="RECA"/>
    <property type="match status" value="1"/>
</dbReference>
<dbReference type="Pfam" id="PF00154">
    <property type="entry name" value="RecA"/>
    <property type="match status" value="1"/>
</dbReference>
<dbReference type="Pfam" id="PF21096">
    <property type="entry name" value="RecA_C"/>
    <property type="match status" value="1"/>
</dbReference>
<dbReference type="PRINTS" id="PR00142">
    <property type="entry name" value="RECA"/>
</dbReference>
<dbReference type="SMART" id="SM00382">
    <property type="entry name" value="AAA"/>
    <property type="match status" value="1"/>
</dbReference>
<dbReference type="SUPFAM" id="SSF52540">
    <property type="entry name" value="P-loop containing nucleoside triphosphate hydrolases"/>
    <property type="match status" value="1"/>
</dbReference>
<dbReference type="SUPFAM" id="SSF54752">
    <property type="entry name" value="RecA protein, C-terminal domain"/>
    <property type="match status" value="1"/>
</dbReference>
<dbReference type="PROSITE" id="PS00321">
    <property type="entry name" value="RECA_1"/>
    <property type="match status" value="1"/>
</dbReference>
<dbReference type="PROSITE" id="PS50162">
    <property type="entry name" value="RECA_2"/>
    <property type="match status" value="1"/>
</dbReference>
<dbReference type="PROSITE" id="PS50163">
    <property type="entry name" value="RECA_3"/>
    <property type="match status" value="1"/>
</dbReference>
<comment type="function">
    <text evidence="1">Can catalyze the hydrolysis of ATP in the presence of single-stranded DNA, the ATP-dependent uptake of single-stranded DNA by duplex DNA, and the ATP-dependent hybridization of homologous single-stranded DNAs. It interacts with LexA causing its activation and leading to its autocatalytic cleavage.</text>
</comment>
<comment type="subcellular location">
    <subcellularLocation>
        <location evidence="1">Cytoplasm</location>
    </subcellularLocation>
</comment>
<comment type="similarity">
    <text evidence="1">Belongs to the RecA family.</text>
</comment>
<comment type="sequence caution" evidence="2">
    <conflict type="erroneous initiation">
        <sequence resource="EMBL-CDS" id="ACP08579"/>
    </conflict>
</comment>
<reference key="1">
    <citation type="submission" date="2007-03" db="EMBL/GenBank/DDBJ databases">
        <authorList>
            <person name="Heidelberg J."/>
        </authorList>
    </citation>
    <scope>NUCLEOTIDE SEQUENCE [LARGE SCALE GENOMIC DNA]</scope>
    <source>
        <strain>ATCC 39541 / Classical Ogawa 395 / O395</strain>
    </source>
</reference>
<reference key="2">
    <citation type="journal article" date="2008" name="PLoS ONE">
        <title>A recalibrated molecular clock and independent origins for the cholera pandemic clones.</title>
        <authorList>
            <person name="Feng L."/>
            <person name="Reeves P.R."/>
            <person name="Lan R."/>
            <person name="Ren Y."/>
            <person name="Gao C."/>
            <person name="Zhou Z."/>
            <person name="Ren Y."/>
            <person name="Cheng J."/>
            <person name="Wang W."/>
            <person name="Wang J."/>
            <person name="Qian W."/>
            <person name="Li D."/>
            <person name="Wang L."/>
        </authorList>
    </citation>
    <scope>NUCLEOTIDE SEQUENCE [LARGE SCALE GENOMIC DNA]</scope>
    <source>
        <strain>ATCC 39541 / Classical Ogawa 395 / O395</strain>
    </source>
</reference>
<keyword id="KW-0067">ATP-binding</keyword>
<keyword id="KW-0963">Cytoplasm</keyword>
<keyword id="KW-0227">DNA damage</keyword>
<keyword id="KW-0233">DNA recombination</keyword>
<keyword id="KW-0234">DNA repair</keyword>
<keyword id="KW-0238">DNA-binding</keyword>
<keyword id="KW-0547">Nucleotide-binding</keyword>
<keyword id="KW-0742">SOS response</keyword>
<accession>A5F9B5</accession>
<accession>C3LX69</accession>
<feature type="chain" id="PRO_1000071896" description="Protein RecA">
    <location>
        <begin position="1"/>
        <end position="354"/>
    </location>
</feature>
<feature type="binding site" evidence="1">
    <location>
        <begin position="65"/>
        <end position="72"/>
    </location>
    <ligand>
        <name>ATP</name>
        <dbReference type="ChEBI" id="CHEBI:30616"/>
    </ligand>
</feature>
<sequence length="354" mass="38208">MDENKQKALAAALGQIEKQFGKGSIMRLGDNRAMDVETISTGSLSLDIALGAGGLPMGRIVEIFGPESSGKTTLTLELIAAAQREGKTCAFIDAEHALDPVYAKKLGVNIDELLVSQPDTGEQALEICDALARSGAVDVIVVDSVAALTPKAEIEGEMGDSHMGLQARMLSQAMRKLTGNLKQSNCMCIFINQIRMKIGVMFGNPETTTGGNALKFYASVRLDIRRTGAIKEGEEVVGNETRIKVVKNKIAAPFKEANTQIMYGQGFNREGELIDLGVKHKMVEKSGAWYSYNGDKIGQGKANACKYLKENPEIAKTLDKKLREMLLNPENMQLTGETASAADDVEFGAVPEEF</sequence>
<name>RECA_VIBC3</name>
<protein>
    <recommendedName>
        <fullName evidence="1">Protein RecA</fullName>
    </recommendedName>
    <alternativeName>
        <fullName evidence="1">Recombinase A</fullName>
    </alternativeName>
</protein>
<evidence type="ECO:0000255" key="1">
    <source>
        <dbReference type="HAMAP-Rule" id="MF_00268"/>
    </source>
</evidence>
<evidence type="ECO:0000305" key="2"/>
<gene>
    <name evidence="1" type="primary">recA</name>
    <name type="ordered locus">VC0395_A0070</name>
    <name type="ordered locus">VC395_0560</name>
</gene>
<organism>
    <name type="scientific">Vibrio cholerae serotype O1 (strain ATCC 39541 / Classical Ogawa 395 / O395)</name>
    <dbReference type="NCBI Taxonomy" id="345073"/>
    <lineage>
        <taxon>Bacteria</taxon>
        <taxon>Pseudomonadati</taxon>
        <taxon>Pseudomonadota</taxon>
        <taxon>Gammaproteobacteria</taxon>
        <taxon>Vibrionales</taxon>
        <taxon>Vibrionaceae</taxon>
        <taxon>Vibrio</taxon>
    </lineage>
</organism>